<evidence type="ECO:0000255" key="1">
    <source>
        <dbReference type="PROSITE-ProRule" id="PRU01283"/>
    </source>
</evidence>
<evidence type="ECO:0000269" key="2">
    <source>
    </source>
</evidence>
<evidence type="ECO:0000303" key="3">
    <source>
    </source>
</evidence>
<evidence type="ECO:0000305" key="4"/>
<evidence type="ECO:0000312" key="5">
    <source>
        <dbReference type="Araport" id="AT5G06370"/>
    </source>
</evidence>
<evidence type="ECO:0000312" key="6">
    <source>
        <dbReference type="EMBL" id="BAB08959.1"/>
    </source>
</evidence>
<proteinExistence type="evidence at transcript level"/>
<name>PSE1_ARATH</name>
<sequence length="259" mass="27847">MGLLSNRIDRSSLKPGDHIYSWRTAYIYAHHGIYVGDDRVIHFTRRGQEVGTGTVLDLILVSSGPSRNHTHCPTCVPPNEGHGVVSSCLNCFLAGGVLYRFEYSVNAAHFLVKARGGTCTLAVADPNEIVVHRAKHLLQNGFGCYDVFKNNCEDFAIYCKTALLVLEGRTMGQSGQAVSIIGGPIAAVLSTPMRLLTTNVYGMAATAIGVYCASRYATDIGMRADVAKVEAEDLTRRLSSGLFQVLDPPLAAIALPSTS</sequence>
<feature type="chain" id="PRO_0000450776" description="Protein LEAD-SENSITIVE 1">
    <location>
        <begin position="1"/>
        <end position="259"/>
    </location>
</feature>
<feature type="domain" description="LRAT" evidence="1">
    <location>
        <begin position="20"/>
        <end position="168"/>
    </location>
</feature>
<feature type="active site" evidence="1">
    <location>
        <position position="30"/>
    </location>
</feature>
<feature type="active site" evidence="1">
    <location>
        <position position="42"/>
    </location>
</feature>
<feature type="active site" description="Acyl-thioester intermediate" evidence="1">
    <location>
        <position position="152"/>
    </location>
</feature>
<dbReference type="EMBL" id="AB006700">
    <property type="protein sequence ID" value="BAB08959.1"/>
    <property type="status" value="ALT_SEQ"/>
    <property type="molecule type" value="Genomic_DNA"/>
</dbReference>
<dbReference type="EMBL" id="CP002688">
    <property type="protein sequence ID" value="AED91007.1"/>
    <property type="molecule type" value="Genomic_DNA"/>
</dbReference>
<dbReference type="EMBL" id="AF380637">
    <property type="protein sequence ID" value="AAK55718.1"/>
    <property type="molecule type" value="mRNA"/>
</dbReference>
<dbReference type="EMBL" id="AY054134">
    <property type="protein sequence ID" value="AAL06795.1"/>
    <property type="molecule type" value="mRNA"/>
</dbReference>
<dbReference type="EMBL" id="AK226465">
    <property type="protein sequence ID" value="BAE98607.1"/>
    <property type="molecule type" value="mRNA"/>
</dbReference>
<dbReference type="RefSeq" id="NP_568167.1">
    <property type="nucleotide sequence ID" value="NM_120720.4"/>
</dbReference>
<dbReference type="FunCoup" id="Q93V51">
    <property type="interactions" value="365"/>
</dbReference>
<dbReference type="IntAct" id="Q93V51">
    <property type="interactions" value="3"/>
</dbReference>
<dbReference type="STRING" id="3702.Q93V51"/>
<dbReference type="PaxDb" id="3702-AT5G06370.1"/>
<dbReference type="ProteomicsDB" id="187426"/>
<dbReference type="EnsemblPlants" id="AT5G06370.1">
    <property type="protein sequence ID" value="AT5G06370.1"/>
    <property type="gene ID" value="AT5G06370"/>
</dbReference>
<dbReference type="GeneID" id="830525"/>
<dbReference type="Gramene" id="AT5G06370.1">
    <property type="protein sequence ID" value="AT5G06370.1"/>
    <property type="gene ID" value="AT5G06370"/>
</dbReference>
<dbReference type="KEGG" id="ath:AT5G06370"/>
<dbReference type="Araport" id="AT5G06370"/>
<dbReference type="TAIR" id="AT5G06370">
    <property type="gene designation" value="PSE1"/>
</dbReference>
<dbReference type="eggNOG" id="ENOG502QUIP">
    <property type="taxonomic scope" value="Eukaryota"/>
</dbReference>
<dbReference type="HOGENOM" id="CLU_062156_0_0_1"/>
<dbReference type="InParanoid" id="Q93V51"/>
<dbReference type="OMA" id="NNGFRCY"/>
<dbReference type="OrthoDB" id="421951at2759"/>
<dbReference type="PhylomeDB" id="Q93V51"/>
<dbReference type="PRO" id="PR:Q93V51"/>
<dbReference type="Proteomes" id="UP000006548">
    <property type="component" value="Chromosome 5"/>
</dbReference>
<dbReference type="ExpressionAtlas" id="Q93V51">
    <property type="expression patterns" value="baseline and differential"/>
</dbReference>
<dbReference type="GO" id="GO:0005737">
    <property type="term" value="C:cytoplasm"/>
    <property type="evidence" value="ECO:0000314"/>
    <property type="project" value="UniProtKB"/>
</dbReference>
<dbReference type="GO" id="GO:0071284">
    <property type="term" value="P:cellular response to lead ion"/>
    <property type="evidence" value="ECO:0000315"/>
    <property type="project" value="TAIR"/>
</dbReference>
<dbReference type="GO" id="GO:0015692">
    <property type="term" value="P:lead ion transport"/>
    <property type="evidence" value="ECO:0000315"/>
    <property type="project" value="UniProtKB"/>
</dbReference>
<dbReference type="GO" id="GO:0046938">
    <property type="term" value="P:phytochelatin biosynthetic process"/>
    <property type="evidence" value="ECO:0000315"/>
    <property type="project" value="UniProtKB"/>
</dbReference>
<dbReference type="GO" id="GO:0010288">
    <property type="term" value="P:response to lead ion"/>
    <property type="evidence" value="ECO:0000315"/>
    <property type="project" value="UniProtKB"/>
</dbReference>
<dbReference type="FunFam" id="3.90.1720.10:FF:000017">
    <property type="entry name" value="BnaA03g55340D protein"/>
    <property type="match status" value="1"/>
</dbReference>
<dbReference type="Gene3D" id="3.90.1720.10">
    <property type="entry name" value="endopeptidase domain like (from Nostoc punctiforme)"/>
    <property type="match status" value="1"/>
</dbReference>
<dbReference type="InterPro" id="IPR007053">
    <property type="entry name" value="LRAT_dom"/>
</dbReference>
<dbReference type="PANTHER" id="PTHR46137">
    <property type="entry name" value="OS05G0310600 PROTEIN"/>
    <property type="match status" value="1"/>
</dbReference>
<dbReference type="PANTHER" id="PTHR46137:SF4">
    <property type="entry name" value="PROTEIN LEAD-SENSITIVE 1"/>
    <property type="match status" value="1"/>
</dbReference>
<dbReference type="Pfam" id="PF04970">
    <property type="entry name" value="LRAT"/>
    <property type="match status" value="1"/>
</dbReference>
<dbReference type="PROSITE" id="PS51934">
    <property type="entry name" value="LRAT"/>
    <property type="match status" value="1"/>
</dbReference>
<organism>
    <name type="scientific">Arabidopsis thaliana</name>
    <name type="common">Mouse-ear cress</name>
    <dbReference type="NCBI Taxonomy" id="3702"/>
    <lineage>
        <taxon>Eukaryota</taxon>
        <taxon>Viridiplantae</taxon>
        <taxon>Streptophyta</taxon>
        <taxon>Embryophyta</taxon>
        <taxon>Tracheophyta</taxon>
        <taxon>Spermatophyta</taxon>
        <taxon>Magnoliopsida</taxon>
        <taxon>eudicotyledons</taxon>
        <taxon>Gunneridae</taxon>
        <taxon>Pentapetalae</taxon>
        <taxon>rosids</taxon>
        <taxon>malvids</taxon>
        <taxon>Brassicales</taxon>
        <taxon>Brassicaceae</taxon>
        <taxon>Camelineae</taxon>
        <taxon>Arabidopsis</taxon>
    </lineage>
</organism>
<reference key="1">
    <citation type="journal article" date="1997" name="DNA Res.">
        <title>Structural analysis of Arabidopsis thaliana chromosome 5. II. Sequence features of the regions of 1,044,062 bp covered by thirteen physically assigned P1 clones.</title>
        <authorList>
            <person name="Kotani H."/>
            <person name="Nakamura Y."/>
            <person name="Sato S."/>
            <person name="Kaneko T."/>
            <person name="Asamizu E."/>
            <person name="Miyajima N."/>
            <person name="Tabata S."/>
        </authorList>
    </citation>
    <scope>NUCLEOTIDE SEQUENCE [LARGE SCALE GENOMIC DNA]</scope>
    <source>
        <strain>cv. Columbia</strain>
    </source>
</reference>
<reference key="2">
    <citation type="journal article" date="2017" name="Plant J.">
        <title>Araport11: a complete reannotation of the Arabidopsis thaliana reference genome.</title>
        <authorList>
            <person name="Cheng C.Y."/>
            <person name="Krishnakumar V."/>
            <person name="Chan A.P."/>
            <person name="Thibaud-Nissen F."/>
            <person name="Schobel S."/>
            <person name="Town C.D."/>
        </authorList>
    </citation>
    <scope>GENOME REANNOTATION</scope>
    <source>
        <strain>cv. Columbia</strain>
    </source>
</reference>
<reference key="3">
    <citation type="journal article" date="2003" name="Science">
        <title>Empirical analysis of transcriptional activity in the Arabidopsis genome.</title>
        <authorList>
            <person name="Yamada K."/>
            <person name="Lim J."/>
            <person name="Dale J.M."/>
            <person name="Chen H."/>
            <person name="Shinn P."/>
            <person name="Palm C.J."/>
            <person name="Southwick A.M."/>
            <person name="Wu H.C."/>
            <person name="Kim C.J."/>
            <person name="Nguyen M."/>
            <person name="Pham P.K."/>
            <person name="Cheuk R.F."/>
            <person name="Karlin-Newmann G."/>
            <person name="Liu S.X."/>
            <person name="Lam B."/>
            <person name="Sakano H."/>
            <person name="Wu T."/>
            <person name="Yu G."/>
            <person name="Miranda M."/>
            <person name="Quach H.L."/>
            <person name="Tripp M."/>
            <person name="Chang C.H."/>
            <person name="Lee J.M."/>
            <person name="Toriumi M.J."/>
            <person name="Chan M.M."/>
            <person name="Tang C.C."/>
            <person name="Onodera C.S."/>
            <person name="Deng J.M."/>
            <person name="Akiyama K."/>
            <person name="Ansari Y."/>
            <person name="Arakawa T."/>
            <person name="Banh J."/>
            <person name="Banno F."/>
            <person name="Bowser L."/>
            <person name="Brooks S.Y."/>
            <person name="Carninci P."/>
            <person name="Chao Q."/>
            <person name="Choy N."/>
            <person name="Enju A."/>
            <person name="Goldsmith A.D."/>
            <person name="Gurjal M."/>
            <person name="Hansen N.F."/>
            <person name="Hayashizaki Y."/>
            <person name="Johnson-Hopson C."/>
            <person name="Hsuan V.W."/>
            <person name="Iida K."/>
            <person name="Karnes M."/>
            <person name="Khan S."/>
            <person name="Koesema E."/>
            <person name="Ishida J."/>
            <person name="Jiang P.X."/>
            <person name="Jones T."/>
            <person name="Kawai J."/>
            <person name="Kamiya A."/>
            <person name="Meyers C."/>
            <person name="Nakajima M."/>
            <person name="Narusaka M."/>
            <person name="Seki M."/>
            <person name="Sakurai T."/>
            <person name="Satou M."/>
            <person name="Tamse R."/>
            <person name="Vaysberg M."/>
            <person name="Wallender E.K."/>
            <person name="Wong C."/>
            <person name="Yamamura Y."/>
            <person name="Yuan S."/>
            <person name="Shinozaki K."/>
            <person name="Davis R.W."/>
            <person name="Theologis A."/>
            <person name="Ecker J.R."/>
        </authorList>
    </citation>
    <scope>NUCLEOTIDE SEQUENCE [LARGE SCALE MRNA]</scope>
    <source>
        <strain>cv. Columbia</strain>
    </source>
</reference>
<reference key="4">
    <citation type="submission" date="2006-07" db="EMBL/GenBank/DDBJ databases">
        <title>Large-scale analysis of RIKEN Arabidopsis full-length (RAFL) cDNAs.</title>
        <authorList>
            <person name="Totoki Y."/>
            <person name="Seki M."/>
            <person name="Ishida J."/>
            <person name="Nakajima M."/>
            <person name="Enju A."/>
            <person name="Kamiya A."/>
            <person name="Narusaka M."/>
            <person name="Shin-i T."/>
            <person name="Nakagawa M."/>
            <person name="Sakamoto N."/>
            <person name="Oishi K."/>
            <person name="Kohara Y."/>
            <person name="Kobayashi M."/>
            <person name="Toyoda A."/>
            <person name="Sakaki Y."/>
            <person name="Sakurai T."/>
            <person name="Iida K."/>
            <person name="Akiyama K."/>
            <person name="Satou M."/>
            <person name="Toyoda T."/>
            <person name="Konagaya A."/>
            <person name="Carninci P."/>
            <person name="Kawai J."/>
            <person name="Hayashizaki Y."/>
            <person name="Shinozaki K."/>
        </authorList>
    </citation>
    <scope>NUCLEOTIDE SEQUENCE [LARGE SCALE MRNA]</scope>
    <source>
        <strain>cv. Columbia</strain>
    </source>
</reference>
<reference key="5">
    <citation type="journal article" date="2016" name="J. Exp. Bot.">
        <title>The PSE1 gene modulates lead tolerance in Arabidopsis.</title>
        <authorList>
            <person name="Fan T."/>
            <person name="Yang L."/>
            <person name="Wu X."/>
            <person name="Ni J."/>
            <person name="Jiang H."/>
            <person name="Zhang Q."/>
            <person name="Fang L."/>
            <person name="Sheng Y."/>
            <person name="Ren Y."/>
            <person name="Cao S."/>
        </authorList>
    </citation>
    <scope>FUNCTION</scope>
    <scope>DISRUPTION PHENOTYPE</scope>
    <scope>SUBCELLULAR LOCATION</scope>
    <scope>INDUCTION BY LEAD STRESS</scope>
    <scope>TISSUE SPECIFICITY</scope>
    <source>
        <strain>cv. Columbia</strain>
    </source>
</reference>
<accession>Q93V51</accession>
<accession>Q9FNH1</accession>
<keyword id="KW-0963">Cytoplasm</keyword>
<keyword id="KW-1185">Reference proteome</keyword>
<keyword id="KW-0346">Stress response</keyword>
<gene>
    <name evidence="3" type="primary">PSE1</name>
    <name evidence="5" type="ordered locus">At5g06370</name>
    <name evidence="6" type="ORF">MHF15.11</name>
</gene>
<comment type="function">
    <text evidence="2">Confers tolerance to lead ions (Pb) stress mediated by Pb(NO(3))(2) probably by promoting Pb accumulation leading to subsequent glutathione-dependent phytochelatin (PC) synthesis and related gene expression, including PDR12/ABCG40, GSH1, GSH2, GR1, GR2, PCS1 and PCS2.</text>
</comment>
<comment type="subcellular location">
    <subcellularLocation>
        <location evidence="2">Cytoplasm</location>
    </subcellularLocation>
</comment>
<comment type="tissue specificity">
    <text evidence="2">Highly expressed in inflorescences, siliques and stems, and, to a lower extent, in roots and leaves.</text>
</comment>
<comment type="induction">
    <text evidence="2">Induced by lead (Pb) stress (Pb(NO(3))(2)).</text>
</comment>
<comment type="disruption phenotype">
    <text evidence="2">Increased sensitivity to lead ions (Pb) stress mediated by Pb(NO(3))(2) associated with a reduced Pb accumulation leading to decreased phytochelatin (PC) synthesis and related gene expression. Higher sensitivity to hydrogen peroxyde H(2)O(2).</text>
</comment>
<comment type="sequence caution" evidence="4">
    <conflict type="erroneous gene model prediction">
        <sequence resource="EMBL-CDS" id="BAB08959"/>
    </conflict>
</comment>
<protein>
    <recommendedName>
        <fullName evidence="3">Protein LEAD-SENSITIVE 1</fullName>
        <shortName evidence="3">Protein Pb-SENSITIVE 1</shortName>
    </recommendedName>
</protein>